<dbReference type="EC" id="3.1.3.11" evidence="1"/>
<dbReference type="EMBL" id="CP000542">
    <property type="protein sequence ID" value="ABM56921.1"/>
    <property type="molecule type" value="Genomic_DNA"/>
</dbReference>
<dbReference type="RefSeq" id="WP_011808932.1">
    <property type="nucleotide sequence ID" value="NC_008786.1"/>
</dbReference>
<dbReference type="SMR" id="A1WH14"/>
<dbReference type="STRING" id="391735.Veis_1149"/>
<dbReference type="GeneID" id="76459810"/>
<dbReference type="KEGG" id="vei:Veis_1149"/>
<dbReference type="eggNOG" id="COG0158">
    <property type="taxonomic scope" value="Bacteria"/>
</dbReference>
<dbReference type="HOGENOM" id="CLU_039977_0_0_4"/>
<dbReference type="OrthoDB" id="9806756at2"/>
<dbReference type="UniPathway" id="UPA00138"/>
<dbReference type="Proteomes" id="UP000000374">
    <property type="component" value="Chromosome"/>
</dbReference>
<dbReference type="GO" id="GO:0005829">
    <property type="term" value="C:cytosol"/>
    <property type="evidence" value="ECO:0007669"/>
    <property type="project" value="TreeGrafter"/>
</dbReference>
<dbReference type="GO" id="GO:0042132">
    <property type="term" value="F:fructose 1,6-bisphosphate 1-phosphatase activity"/>
    <property type="evidence" value="ECO:0007669"/>
    <property type="project" value="UniProtKB-UniRule"/>
</dbReference>
<dbReference type="GO" id="GO:0000287">
    <property type="term" value="F:magnesium ion binding"/>
    <property type="evidence" value="ECO:0007669"/>
    <property type="project" value="UniProtKB-UniRule"/>
</dbReference>
<dbReference type="GO" id="GO:0030388">
    <property type="term" value="P:fructose 1,6-bisphosphate metabolic process"/>
    <property type="evidence" value="ECO:0007669"/>
    <property type="project" value="TreeGrafter"/>
</dbReference>
<dbReference type="GO" id="GO:0006002">
    <property type="term" value="P:fructose 6-phosphate metabolic process"/>
    <property type="evidence" value="ECO:0007669"/>
    <property type="project" value="TreeGrafter"/>
</dbReference>
<dbReference type="GO" id="GO:0006000">
    <property type="term" value="P:fructose metabolic process"/>
    <property type="evidence" value="ECO:0007669"/>
    <property type="project" value="TreeGrafter"/>
</dbReference>
<dbReference type="GO" id="GO:0006094">
    <property type="term" value="P:gluconeogenesis"/>
    <property type="evidence" value="ECO:0007669"/>
    <property type="project" value="UniProtKB-UniRule"/>
</dbReference>
<dbReference type="GO" id="GO:0005986">
    <property type="term" value="P:sucrose biosynthetic process"/>
    <property type="evidence" value="ECO:0007669"/>
    <property type="project" value="TreeGrafter"/>
</dbReference>
<dbReference type="CDD" id="cd00354">
    <property type="entry name" value="FBPase"/>
    <property type="match status" value="1"/>
</dbReference>
<dbReference type="FunFam" id="3.30.540.10:FF:000006">
    <property type="entry name" value="Fructose-1,6-bisphosphatase class 1"/>
    <property type="match status" value="1"/>
</dbReference>
<dbReference type="FunFam" id="3.40.190.80:FF:000011">
    <property type="entry name" value="Fructose-1,6-bisphosphatase class 1"/>
    <property type="match status" value="1"/>
</dbReference>
<dbReference type="Gene3D" id="3.40.190.80">
    <property type="match status" value="1"/>
</dbReference>
<dbReference type="Gene3D" id="3.30.540.10">
    <property type="entry name" value="Fructose-1,6-Bisphosphatase, subunit A, domain 1"/>
    <property type="match status" value="1"/>
</dbReference>
<dbReference type="HAMAP" id="MF_01855">
    <property type="entry name" value="FBPase_class1"/>
    <property type="match status" value="1"/>
</dbReference>
<dbReference type="InterPro" id="IPR044015">
    <property type="entry name" value="FBPase_C_dom"/>
</dbReference>
<dbReference type="InterPro" id="IPR000146">
    <property type="entry name" value="FBPase_class-1"/>
</dbReference>
<dbReference type="InterPro" id="IPR033391">
    <property type="entry name" value="FBPase_N"/>
</dbReference>
<dbReference type="InterPro" id="IPR028343">
    <property type="entry name" value="FBPtase"/>
</dbReference>
<dbReference type="InterPro" id="IPR020548">
    <property type="entry name" value="Fructose_bisphosphatase_AS"/>
</dbReference>
<dbReference type="NCBIfam" id="NF006778">
    <property type="entry name" value="PRK09293.1-1"/>
    <property type="match status" value="1"/>
</dbReference>
<dbReference type="NCBIfam" id="NF006779">
    <property type="entry name" value="PRK09293.1-3"/>
    <property type="match status" value="1"/>
</dbReference>
<dbReference type="NCBIfam" id="NF006780">
    <property type="entry name" value="PRK09293.1-4"/>
    <property type="match status" value="1"/>
</dbReference>
<dbReference type="PANTHER" id="PTHR11556">
    <property type="entry name" value="FRUCTOSE-1,6-BISPHOSPHATASE-RELATED"/>
    <property type="match status" value="1"/>
</dbReference>
<dbReference type="PANTHER" id="PTHR11556:SF35">
    <property type="entry name" value="SEDOHEPTULOSE-1,7-BISPHOSPHATASE, CHLOROPLASTIC"/>
    <property type="match status" value="1"/>
</dbReference>
<dbReference type="Pfam" id="PF00316">
    <property type="entry name" value="FBPase"/>
    <property type="match status" value="1"/>
</dbReference>
<dbReference type="Pfam" id="PF18913">
    <property type="entry name" value="FBPase_C"/>
    <property type="match status" value="1"/>
</dbReference>
<dbReference type="PIRSF" id="PIRSF500210">
    <property type="entry name" value="FBPtase"/>
    <property type="match status" value="1"/>
</dbReference>
<dbReference type="PIRSF" id="PIRSF000904">
    <property type="entry name" value="FBPtase_SBPase"/>
    <property type="match status" value="1"/>
</dbReference>
<dbReference type="PRINTS" id="PR00115">
    <property type="entry name" value="F16BPHPHTASE"/>
</dbReference>
<dbReference type="SUPFAM" id="SSF56655">
    <property type="entry name" value="Carbohydrate phosphatase"/>
    <property type="match status" value="1"/>
</dbReference>
<dbReference type="PROSITE" id="PS00124">
    <property type="entry name" value="FBPASE"/>
    <property type="match status" value="1"/>
</dbReference>
<evidence type="ECO:0000255" key="1">
    <source>
        <dbReference type="HAMAP-Rule" id="MF_01855"/>
    </source>
</evidence>
<name>F16PA_VEREI</name>
<organism>
    <name type="scientific">Verminephrobacter eiseniae (strain EF01-2)</name>
    <dbReference type="NCBI Taxonomy" id="391735"/>
    <lineage>
        <taxon>Bacteria</taxon>
        <taxon>Pseudomonadati</taxon>
        <taxon>Pseudomonadota</taxon>
        <taxon>Betaproteobacteria</taxon>
        <taxon>Burkholderiales</taxon>
        <taxon>Comamonadaceae</taxon>
        <taxon>Verminephrobacter</taxon>
    </lineage>
</organism>
<reference key="1">
    <citation type="submission" date="2006-12" db="EMBL/GenBank/DDBJ databases">
        <title>Complete sequence of chromosome 1 of Verminephrobacter eiseniae EF01-2.</title>
        <authorList>
            <person name="Copeland A."/>
            <person name="Lucas S."/>
            <person name="Lapidus A."/>
            <person name="Barry K."/>
            <person name="Detter J.C."/>
            <person name="Glavina del Rio T."/>
            <person name="Dalin E."/>
            <person name="Tice H."/>
            <person name="Pitluck S."/>
            <person name="Chertkov O."/>
            <person name="Brettin T."/>
            <person name="Bruce D."/>
            <person name="Han C."/>
            <person name="Tapia R."/>
            <person name="Gilna P."/>
            <person name="Schmutz J."/>
            <person name="Larimer F."/>
            <person name="Land M."/>
            <person name="Hauser L."/>
            <person name="Kyrpides N."/>
            <person name="Kim E."/>
            <person name="Stahl D."/>
            <person name="Richardson P."/>
        </authorList>
    </citation>
    <scope>NUCLEOTIDE SEQUENCE [LARGE SCALE GENOMIC DNA]</scope>
    <source>
        <strain>EF01-2</strain>
    </source>
</reference>
<keyword id="KW-0119">Carbohydrate metabolism</keyword>
<keyword id="KW-0963">Cytoplasm</keyword>
<keyword id="KW-0378">Hydrolase</keyword>
<keyword id="KW-0460">Magnesium</keyword>
<keyword id="KW-0479">Metal-binding</keyword>
<keyword id="KW-1185">Reference proteome</keyword>
<feature type="chain" id="PRO_0000364737" description="Fructose-1,6-bisphosphatase class 1">
    <location>
        <begin position="1"/>
        <end position="335"/>
    </location>
</feature>
<feature type="binding site" evidence="1">
    <location>
        <position position="92"/>
    </location>
    <ligand>
        <name>Mg(2+)</name>
        <dbReference type="ChEBI" id="CHEBI:18420"/>
        <label>1</label>
    </ligand>
</feature>
<feature type="binding site" evidence="1">
    <location>
        <position position="114"/>
    </location>
    <ligand>
        <name>Mg(2+)</name>
        <dbReference type="ChEBI" id="CHEBI:18420"/>
        <label>1</label>
    </ligand>
</feature>
<feature type="binding site" evidence="1">
    <location>
        <position position="114"/>
    </location>
    <ligand>
        <name>Mg(2+)</name>
        <dbReference type="ChEBI" id="CHEBI:18420"/>
        <label>2</label>
    </ligand>
</feature>
<feature type="binding site" evidence="1">
    <location>
        <position position="116"/>
    </location>
    <ligand>
        <name>Mg(2+)</name>
        <dbReference type="ChEBI" id="CHEBI:18420"/>
        <label>1</label>
    </ligand>
</feature>
<feature type="binding site" evidence="1">
    <location>
        <begin position="117"/>
        <end position="120"/>
    </location>
    <ligand>
        <name>substrate</name>
    </ligand>
</feature>
<feature type="binding site" evidence="1">
    <location>
        <position position="117"/>
    </location>
    <ligand>
        <name>Mg(2+)</name>
        <dbReference type="ChEBI" id="CHEBI:18420"/>
        <label>2</label>
    </ligand>
</feature>
<feature type="binding site" evidence="1">
    <location>
        <position position="209"/>
    </location>
    <ligand>
        <name>substrate</name>
    </ligand>
</feature>
<feature type="binding site" evidence="1">
    <location>
        <position position="275"/>
    </location>
    <ligand>
        <name>substrate</name>
    </ligand>
</feature>
<feature type="binding site" evidence="1">
    <location>
        <position position="281"/>
    </location>
    <ligand>
        <name>Mg(2+)</name>
        <dbReference type="ChEBI" id="CHEBI:18420"/>
        <label>2</label>
    </ligand>
</feature>
<sequence length="335" mass="37084">MATSISLTRYLVEQQRAGGLIPAQLRLLLEVVARACKSISHAVSKGALGDVLGTAGSENVQGEVQKKLDIIANGVLIEANEWGGHLAAMASEEMDGIYLVPHRYPQGEYLLLFDPLDGSSNIDVNVSIGTIFSVLRKPDGERRVEETDFLQPGTRQVAAGYCIYGPQTMLALTVGAGVALFTLDREQGSFVLTQENLRIPEETREFAINMSNMRHWAAPVKRYIDECLQGRSGPRGKDFNMRWVASMVADMHRILSRGGVFLYPWDRREPHKPGKLRLLYEANPMGWLVEQAGGAASNGRQRILEIQPTHLHERVSVILGSKNEVERVALYHGAR</sequence>
<proteinExistence type="inferred from homology"/>
<gene>
    <name evidence="1" type="primary">fbp</name>
    <name type="ordered locus">Veis_1149</name>
</gene>
<protein>
    <recommendedName>
        <fullName evidence="1">Fructose-1,6-bisphosphatase class 1</fullName>
        <shortName evidence="1">FBPase class 1</shortName>
        <ecNumber evidence="1">3.1.3.11</ecNumber>
    </recommendedName>
    <alternativeName>
        <fullName evidence="1">D-fructose-1,6-bisphosphate 1-phosphohydrolase class 1</fullName>
    </alternativeName>
</protein>
<comment type="catalytic activity">
    <reaction evidence="1">
        <text>beta-D-fructose 1,6-bisphosphate + H2O = beta-D-fructose 6-phosphate + phosphate</text>
        <dbReference type="Rhea" id="RHEA:11064"/>
        <dbReference type="ChEBI" id="CHEBI:15377"/>
        <dbReference type="ChEBI" id="CHEBI:32966"/>
        <dbReference type="ChEBI" id="CHEBI:43474"/>
        <dbReference type="ChEBI" id="CHEBI:57634"/>
        <dbReference type="EC" id="3.1.3.11"/>
    </reaction>
</comment>
<comment type="cofactor">
    <cofactor evidence="1">
        <name>Mg(2+)</name>
        <dbReference type="ChEBI" id="CHEBI:18420"/>
    </cofactor>
    <text evidence="1">Binds 2 magnesium ions per subunit.</text>
</comment>
<comment type="pathway">
    <text evidence="1">Carbohydrate biosynthesis; gluconeogenesis.</text>
</comment>
<comment type="subunit">
    <text evidence="1">Homotetramer.</text>
</comment>
<comment type="subcellular location">
    <subcellularLocation>
        <location evidence="1">Cytoplasm</location>
    </subcellularLocation>
</comment>
<comment type="similarity">
    <text evidence="1">Belongs to the FBPase class 1 family.</text>
</comment>
<accession>A1WH14</accession>